<reference key="1">
    <citation type="journal article" date="2001" name="Nature">
        <title>The DNA sequence and comparative analysis of human chromosome 20.</title>
        <authorList>
            <person name="Deloukas P."/>
            <person name="Matthews L.H."/>
            <person name="Ashurst J.L."/>
            <person name="Burton J."/>
            <person name="Gilbert J.G.R."/>
            <person name="Jones M."/>
            <person name="Stavrides G."/>
            <person name="Almeida J.P."/>
            <person name="Babbage A.K."/>
            <person name="Bagguley C.L."/>
            <person name="Bailey J."/>
            <person name="Barlow K.F."/>
            <person name="Bates K.N."/>
            <person name="Beard L.M."/>
            <person name="Beare D.M."/>
            <person name="Beasley O.P."/>
            <person name="Bird C.P."/>
            <person name="Blakey S.E."/>
            <person name="Bridgeman A.M."/>
            <person name="Brown A.J."/>
            <person name="Buck D."/>
            <person name="Burrill W.D."/>
            <person name="Butler A.P."/>
            <person name="Carder C."/>
            <person name="Carter N.P."/>
            <person name="Chapman J.C."/>
            <person name="Clamp M."/>
            <person name="Clark G."/>
            <person name="Clark L.N."/>
            <person name="Clark S.Y."/>
            <person name="Clee C.M."/>
            <person name="Clegg S."/>
            <person name="Cobley V.E."/>
            <person name="Collier R.E."/>
            <person name="Connor R.E."/>
            <person name="Corby N.R."/>
            <person name="Coulson A."/>
            <person name="Coville G.J."/>
            <person name="Deadman R."/>
            <person name="Dhami P.D."/>
            <person name="Dunn M."/>
            <person name="Ellington A.G."/>
            <person name="Frankland J.A."/>
            <person name="Fraser A."/>
            <person name="French L."/>
            <person name="Garner P."/>
            <person name="Grafham D.V."/>
            <person name="Griffiths C."/>
            <person name="Griffiths M.N.D."/>
            <person name="Gwilliam R."/>
            <person name="Hall R.E."/>
            <person name="Hammond S."/>
            <person name="Harley J.L."/>
            <person name="Heath P.D."/>
            <person name="Ho S."/>
            <person name="Holden J.L."/>
            <person name="Howden P.J."/>
            <person name="Huckle E."/>
            <person name="Hunt A.R."/>
            <person name="Hunt S.E."/>
            <person name="Jekosch K."/>
            <person name="Johnson C.M."/>
            <person name="Johnson D."/>
            <person name="Kay M.P."/>
            <person name="Kimberley A.M."/>
            <person name="King A."/>
            <person name="Knights A."/>
            <person name="Laird G.K."/>
            <person name="Lawlor S."/>
            <person name="Lehvaeslaiho M.H."/>
            <person name="Leversha M.A."/>
            <person name="Lloyd C."/>
            <person name="Lloyd D.M."/>
            <person name="Lovell J.D."/>
            <person name="Marsh V.L."/>
            <person name="Martin S.L."/>
            <person name="McConnachie L.J."/>
            <person name="McLay K."/>
            <person name="McMurray A.A."/>
            <person name="Milne S.A."/>
            <person name="Mistry D."/>
            <person name="Moore M.J.F."/>
            <person name="Mullikin J.C."/>
            <person name="Nickerson T."/>
            <person name="Oliver K."/>
            <person name="Parker A."/>
            <person name="Patel R."/>
            <person name="Pearce T.A.V."/>
            <person name="Peck A.I."/>
            <person name="Phillimore B.J.C.T."/>
            <person name="Prathalingam S.R."/>
            <person name="Plumb R.W."/>
            <person name="Ramsay H."/>
            <person name="Rice C.M."/>
            <person name="Ross M.T."/>
            <person name="Scott C.E."/>
            <person name="Sehra H.K."/>
            <person name="Shownkeen R."/>
            <person name="Sims S."/>
            <person name="Skuce C.D."/>
            <person name="Smith M.L."/>
            <person name="Soderlund C."/>
            <person name="Steward C.A."/>
            <person name="Sulston J.E."/>
            <person name="Swann R.M."/>
            <person name="Sycamore N."/>
            <person name="Taylor R."/>
            <person name="Tee L."/>
            <person name="Thomas D.W."/>
            <person name="Thorpe A."/>
            <person name="Tracey A."/>
            <person name="Tromans A.C."/>
            <person name="Vaudin M."/>
            <person name="Wall M."/>
            <person name="Wallis J.M."/>
            <person name="Whitehead S.L."/>
            <person name="Whittaker P."/>
            <person name="Willey D.L."/>
            <person name="Williams L."/>
            <person name="Williams S.A."/>
            <person name="Wilming L."/>
            <person name="Wray P.W."/>
            <person name="Hubbard T."/>
            <person name="Durbin R.M."/>
            <person name="Bentley D.R."/>
            <person name="Beck S."/>
            <person name="Rogers J."/>
        </authorList>
    </citation>
    <scope>NUCLEOTIDE SEQUENCE [LARGE SCALE GENOMIC DNA]</scope>
</reference>
<feature type="chain" id="PRO_0000079443" description="Putative uncharacterized protein SCP2D1-AS1">
    <location>
        <begin position="1"/>
        <end position="151"/>
    </location>
</feature>
<feature type="region of interest" description="Disordered" evidence="1">
    <location>
        <begin position="122"/>
        <end position="151"/>
    </location>
</feature>
<sequence length="151" mass="17183">MFQVFKPHAGEDYKYPRETETIWSHPYVVEGSHKSPLESLSLHGCLAAMAPSITSSEDSSPSQRDKKDLSLDLLLTRKKRSQGLHWSHWQGLNHMSIRIHTPEQGSPSLGQNWSWGNRKEKGVAQRQVPTTGTHSFFHCTSEGNKEKPHHF</sequence>
<keyword id="KW-1185">Reference proteome</keyword>
<organism>
    <name type="scientific">Homo sapiens</name>
    <name type="common">Human</name>
    <dbReference type="NCBI Taxonomy" id="9606"/>
    <lineage>
        <taxon>Eukaryota</taxon>
        <taxon>Metazoa</taxon>
        <taxon>Chordata</taxon>
        <taxon>Craniata</taxon>
        <taxon>Vertebrata</taxon>
        <taxon>Euteleostomi</taxon>
        <taxon>Mammalia</taxon>
        <taxon>Eutheria</taxon>
        <taxon>Euarchontoglires</taxon>
        <taxon>Primates</taxon>
        <taxon>Haplorrhini</taxon>
        <taxon>Catarrhini</taxon>
        <taxon>Hominidae</taxon>
        <taxon>Homo</taxon>
    </lineage>
</organism>
<dbReference type="EMBL" id="AL035563">
    <property type="status" value="NOT_ANNOTATED_CDS"/>
    <property type="molecule type" value="Genomic_DNA"/>
</dbReference>
<dbReference type="RefSeq" id="NP_001229600.1">
    <property type="nucleotide sequence ID" value="NM_001242671.2"/>
</dbReference>
<dbReference type="BioMuta" id="HGNC:16210"/>
<dbReference type="PaxDb" id="9606-ENSP00000278779"/>
<dbReference type="AGR" id="HGNC:16210"/>
<dbReference type="GeneCards" id="SCP2D1-AS1"/>
<dbReference type="HGNC" id="HGNC:16210">
    <property type="gene designation" value="SCP2D1-AS1"/>
</dbReference>
<dbReference type="neXtProt" id="NX_Q9BR46"/>
<dbReference type="eggNOG" id="ENOG502TK0G">
    <property type="taxonomic scope" value="Eukaryota"/>
</dbReference>
<dbReference type="InParanoid" id="Q9BR46"/>
<dbReference type="PAN-GO" id="Q9BR46">
    <property type="GO annotations" value="0 GO annotations based on evolutionary models"/>
</dbReference>
<dbReference type="PhylomeDB" id="Q9BR46"/>
<dbReference type="TreeFam" id="TF342336"/>
<dbReference type="BioGRID-ORCS" id="100128496">
    <property type="hits" value="5 hits in 1105 CRISPR screens"/>
</dbReference>
<dbReference type="ChiTaRS" id="C20orf78">
    <property type="organism name" value="human"/>
</dbReference>
<dbReference type="Pharos" id="Q9BR46">
    <property type="development level" value="Tdark"/>
</dbReference>
<dbReference type="Proteomes" id="UP000005640">
    <property type="component" value="Unplaced"/>
</dbReference>
<dbReference type="RNAct" id="Q9BR46">
    <property type="molecule type" value="protein"/>
</dbReference>
<gene>
    <name evidence="3" type="primary">SCP2D1-AS1</name>
    <name type="synonym">C20orf78</name>
</gene>
<protein>
    <recommendedName>
        <fullName>Putative uncharacterized protein SCP2D1-AS1</fullName>
    </recommendedName>
    <alternativeName>
        <fullName evidence="3">SCP2D1 antisense RNA 1</fullName>
    </alternativeName>
</protein>
<accession>Q9BR46</accession>
<name>SCAS1_HUMAN</name>
<evidence type="ECO:0000256" key="1">
    <source>
        <dbReference type="SAM" id="MobiDB-lite"/>
    </source>
</evidence>
<evidence type="ECO:0000305" key="2"/>
<evidence type="ECO:0000312" key="3">
    <source>
        <dbReference type="HGNC" id="HGNC:16210"/>
    </source>
</evidence>
<proteinExistence type="uncertain"/>
<comment type="caution">
    <text evidence="2">Product of a dubious gene prediction.</text>
</comment>